<name>Y1234_BREBN</name>
<dbReference type="EMBL" id="AP008955">
    <property type="protein sequence ID" value="BAH42211.1"/>
    <property type="molecule type" value="Genomic_DNA"/>
</dbReference>
<dbReference type="RefSeq" id="WP_012684962.1">
    <property type="nucleotide sequence ID" value="NC_012491.1"/>
</dbReference>
<dbReference type="STRING" id="358681.BBR47_12340"/>
<dbReference type="KEGG" id="bbe:BBR47_12340"/>
<dbReference type="eggNOG" id="COG2707">
    <property type="taxonomic scope" value="Bacteria"/>
</dbReference>
<dbReference type="HOGENOM" id="CLU_125889_0_0_9"/>
<dbReference type="Proteomes" id="UP000001877">
    <property type="component" value="Chromosome"/>
</dbReference>
<dbReference type="GO" id="GO:0005886">
    <property type="term" value="C:plasma membrane"/>
    <property type="evidence" value="ECO:0007669"/>
    <property type="project" value="UniProtKB-SubCell"/>
</dbReference>
<dbReference type="HAMAP" id="MF_01874">
    <property type="entry name" value="UPF0756"/>
    <property type="match status" value="1"/>
</dbReference>
<dbReference type="InterPro" id="IPR007382">
    <property type="entry name" value="UPF0756_TM"/>
</dbReference>
<dbReference type="PANTHER" id="PTHR38452">
    <property type="entry name" value="UPF0756 MEMBRANE PROTEIN YEAL"/>
    <property type="match status" value="1"/>
</dbReference>
<dbReference type="PANTHER" id="PTHR38452:SF1">
    <property type="entry name" value="UPF0756 MEMBRANE PROTEIN YEAL"/>
    <property type="match status" value="1"/>
</dbReference>
<dbReference type="Pfam" id="PF04284">
    <property type="entry name" value="DUF441"/>
    <property type="match status" value="1"/>
</dbReference>
<reference key="1">
    <citation type="submission" date="2005-03" db="EMBL/GenBank/DDBJ databases">
        <title>Brevibacillus brevis strain 47, complete genome.</title>
        <authorList>
            <person name="Hosoyama A."/>
            <person name="Yamada R."/>
            <person name="Hongo Y."/>
            <person name="Terui Y."/>
            <person name="Ankai A."/>
            <person name="Masuyama W."/>
            <person name="Sekiguchi M."/>
            <person name="Takeda T."/>
            <person name="Asano K."/>
            <person name="Ohji S."/>
            <person name="Ichikawa N."/>
            <person name="Narita S."/>
            <person name="Aoki N."/>
            <person name="Miura H."/>
            <person name="Matsushita S."/>
            <person name="Sekigawa T."/>
            <person name="Yamagata H."/>
            <person name="Yoshikawa H."/>
            <person name="Udaka S."/>
            <person name="Tanikawa S."/>
            <person name="Fujita N."/>
        </authorList>
    </citation>
    <scope>NUCLEOTIDE SEQUENCE [LARGE SCALE GENOMIC DNA]</scope>
    <source>
        <strain>47 / JCM 6285 / NBRC 100599</strain>
    </source>
</reference>
<sequence length="149" mass="15805">MLHTTIILLVIALLSLVAKDLVLVYASLLLLGLSLLKAVPVMDAIQKPMFHVGLFCLMVFLLIPIAKGKYDFISLGKEMVSWKATIAILAGFIISYVGGKGLSILPDQPVVFIGVTIGTLLAVLLSNGLPAGLIIAAGCIALLSRIFNF</sequence>
<evidence type="ECO:0000255" key="1">
    <source>
        <dbReference type="HAMAP-Rule" id="MF_01874"/>
    </source>
</evidence>
<organism>
    <name type="scientific">Brevibacillus brevis (strain 47 / JCM 6285 / NBRC 100599)</name>
    <dbReference type="NCBI Taxonomy" id="358681"/>
    <lineage>
        <taxon>Bacteria</taxon>
        <taxon>Bacillati</taxon>
        <taxon>Bacillota</taxon>
        <taxon>Bacilli</taxon>
        <taxon>Bacillales</taxon>
        <taxon>Paenibacillaceae</taxon>
        <taxon>Brevibacillus</taxon>
    </lineage>
</organism>
<gene>
    <name type="ordered locus">BBR47_12340</name>
</gene>
<keyword id="KW-1003">Cell membrane</keyword>
<keyword id="KW-0472">Membrane</keyword>
<keyword id="KW-1185">Reference proteome</keyword>
<keyword id="KW-0812">Transmembrane</keyword>
<keyword id="KW-1133">Transmembrane helix</keyword>
<accession>C0Z7G8</accession>
<protein>
    <recommendedName>
        <fullName evidence="1">UPF0756 membrane protein BBR47_12340</fullName>
    </recommendedName>
</protein>
<feature type="chain" id="PRO_0000388840" description="UPF0756 membrane protein BBR47_12340">
    <location>
        <begin position="1"/>
        <end position="149"/>
    </location>
</feature>
<feature type="transmembrane region" description="Helical" evidence="1">
    <location>
        <begin position="6"/>
        <end position="26"/>
    </location>
</feature>
<feature type="transmembrane region" description="Helical" evidence="1">
    <location>
        <begin position="48"/>
        <end position="68"/>
    </location>
</feature>
<feature type="transmembrane region" description="Helical" evidence="1">
    <location>
        <begin position="86"/>
        <end position="106"/>
    </location>
</feature>
<feature type="transmembrane region" description="Helical" evidence="1">
    <location>
        <begin position="120"/>
        <end position="140"/>
    </location>
</feature>
<comment type="subcellular location">
    <subcellularLocation>
        <location evidence="1">Cell membrane</location>
        <topology evidence="1">Multi-pass membrane protein</topology>
    </subcellularLocation>
</comment>
<comment type="similarity">
    <text evidence="1">Belongs to the UPF0756 family.</text>
</comment>
<proteinExistence type="inferred from homology"/>